<evidence type="ECO:0000305" key="1"/>
<organism>
    <name type="scientific">Archaeoglobus fulgidus (strain ATCC 49558 / DSM 4304 / JCM 9628 / NBRC 100126 / VC-16)</name>
    <dbReference type="NCBI Taxonomy" id="224325"/>
    <lineage>
        <taxon>Archaea</taxon>
        <taxon>Methanobacteriati</taxon>
        <taxon>Methanobacteriota</taxon>
        <taxon>Archaeoglobi</taxon>
        <taxon>Archaeoglobales</taxon>
        <taxon>Archaeoglobaceae</taxon>
        <taxon>Archaeoglobus</taxon>
    </lineage>
</organism>
<comment type="similarity">
    <text evidence="1">Belongs to the UPF0251 family.</text>
</comment>
<proteinExistence type="inferred from homology"/>
<accession>O29591</accession>
<reference key="1">
    <citation type="journal article" date="1997" name="Nature">
        <title>The complete genome sequence of the hyperthermophilic, sulphate-reducing archaeon Archaeoglobus fulgidus.</title>
        <authorList>
            <person name="Klenk H.-P."/>
            <person name="Clayton R.A."/>
            <person name="Tomb J.-F."/>
            <person name="White O."/>
            <person name="Nelson K.E."/>
            <person name="Ketchum K.A."/>
            <person name="Dodson R.J."/>
            <person name="Gwinn M.L."/>
            <person name="Hickey E.K."/>
            <person name="Peterson J.D."/>
            <person name="Richardson D.L."/>
            <person name="Kerlavage A.R."/>
            <person name="Graham D.E."/>
            <person name="Kyrpides N.C."/>
            <person name="Fleischmann R.D."/>
            <person name="Quackenbush J."/>
            <person name="Lee N.H."/>
            <person name="Sutton G.G."/>
            <person name="Gill S.R."/>
            <person name="Kirkness E.F."/>
            <person name="Dougherty B.A."/>
            <person name="McKenney K."/>
            <person name="Adams M.D."/>
            <person name="Loftus B.J."/>
            <person name="Peterson S.N."/>
            <person name="Reich C.I."/>
            <person name="McNeil L.K."/>
            <person name="Badger J.H."/>
            <person name="Glodek A."/>
            <person name="Zhou L."/>
            <person name="Overbeek R."/>
            <person name="Gocayne J.D."/>
            <person name="Weidman J.F."/>
            <person name="McDonald L.A."/>
            <person name="Utterback T.R."/>
            <person name="Cotton M.D."/>
            <person name="Spriggs T."/>
            <person name="Artiach P."/>
            <person name="Kaine B.P."/>
            <person name="Sykes S.M."/>
            <person name="Sadow P.W."/>
            <person name="D'Andrea K.P."/>
            <person name="Bowman C."/>
            <person name="Fujii C."/>
            <person name="Garland S.A."/>
            <person name="Mason T.M."/>
            <person name="Olsen G.J."/>
            <person name="Fraser C.M."/>
            <person name="Smith H.O."/>
            <person name="Woese C.R."/>
            <person name="Venter J.C."/>
        </authorList>
    </citation>
    <scope>NUCLEOTIDE SEQUENCE [LARGE SCALE GENOMIC DNA]</scope>
    <source>
        <strain>ATCC 49558 / DSM 4304 / JCM 9628 / NBRC 100126 / VC-16</strain>
    </source>
</reference>
<name>Y666_ARCFU</name>
<feature type="chain" id="PRO_0000147572" description="UPF0251 protein AF_0666">
    <location>
        <begin position="1"/>
        <end position="105"/>
    </location>
</feature>
<dbReference type="EMBL" id="AE000782">
    <property type="protein sequence ID" value="AAB90575.1"/>
    <property type="molecule type" value="Genomic_DNA"/>
</dbReference>
<dbReference type="PIR" id="B69333">
    <property type="entry name" value="B69333"/>
</dbReference>
<dbReference type="RefSeq" id="WP_010878169.1">
    <property type="nucleotide sequence ID" value="NC_000917.1"/>
</dbReference>
<dbReference type="SMR" id="O29591"/>
<dbReference type="STRING" id="224325.AF_0666"/>
<dbReference type="PaxDb" id="224325-AF_0666"/>
<dbReference type="EnsemblBacteria" id="AAB90575">
    <property type="protein sequence ID" value="AAB90575"/>
    <property type="gene ID" value="AF_0666"/>
</dbReference>
<dbReference type="GeneID" id="43496657"/>
<dbReference type="KEGG" id="afu:AF_0666"/>
<dbReference type="eggNOG" id="arCOG02238">
    <property type="taxonomic scope" value="Archaea"/>
</dbReference>
<dbReference type="HOGENOM" id="CLU_094511_2_0_2"/>
<dbReference type="OrthoDB" id="74471at2157"/>
<dbReference type="PhylomeDB" id="O29591"/>
<dbReference type="Proteomes" id="UP000002199">
    <property type="component" value="Chromosome"/>
</dbReference>
<dbReference type="Gene3D" id="1.10.10.10">
    <property type="entry name" value="Winged helix-like DNA-binding domain superfamily/Winged helix DNA-binding domain"/>
    <property type="match status" value="1"/>
</dbReference>
<dbReference type="HAMAP" id="MF_00674">
    <property type="entry name" value="UPF0251"/>
    <property type="match status" value="1"/>
</dbReference>
<dbReference type="InterPro" id="IPR013324">
    <property type="entry name" value="RNA_pol_sigma_r3/r4-like"/>
</dbReference>
<dbReference type="InterPro" id="IPR002852">
    <property type="entry name" value="UPF0251"/>
</dbReference>
<dbReference type="InterPro" id="IPR036388">
    <property type="entry name" value="WH-like_DNA-bd_sf"/>
</dbReference>
<dbReference type="NCBIfam" id="NF003257">
    <property type="entry name" value="PRK04217.1"/>
    <property type="match status" value="1"/>
</dbReference>
<dbReference type="PANTHER" id="PTHR37478">
    <property type="match status" value="1"/>
</dbReference>
<dbReference type="PANTHER" id="PTHR37478:SF2">
    <property type="entry name" value="UPF0251 PROTEIN TK0562"/>
    <property type="match status" value="1"/>
</dbReference>
<dbReference type="Pfam" id="PF02001">
    <property type="entry name" value="DUF134"/>
    <property type="match status" value="1"/>
</dbReference>
<dbReference type="SUPFAM" id="SSF88659">
    <property type="entry name" value="Sigma3 and sigma4 domains of RNA polymerase sigma factors"/>
    <property type="match status" value="1"/>
</dbReference>
<gene>
    <name type="ordered locus">AF_0666</name>
</gene>
<keyword id="KW-1185">Reference proteome</keyword>
<protein>
    <recommendedName>
        <fullName>UPF0251 protein AF_0666</fullName>
    </recommendedName>
</protein>
<sequence>MFRWRKGKCRGRKLRDIYISGLPAVRAMIPEPGTGKKPVAINLAEAEALRLVDYEEMSFDDAAAKMGVSKATVWRLVNAARKKMAKAVFEGRAILITKGGELERL</sequence>